<comment type="function">
    <text evidence="1">Specifically methylates the N4 position of cytidine in position 1402 (C1402) of 16S rRNA.</text>
</comment>
<comment type="catalytic activity">
    <reaction evidence="1">
        <text>cytidine(1402) in 16S rRNA + S-adenosyl-L-methionine = N(4)-methylcytidine(1402) in 16S rRNA + S-adenosyl-L-homocysteine + H(+)</text>
        <dbReference type="Rhea" id="RHEA:42928"/>
        <dbReference type="Rhea" id="RHEA-COMP:10286"/>
        <dbReference type="Rhea" id="RHEA-COMP:10287"/>
        <dbReference type="ChEBI" id="CHEBI:15378"/>
        <dbReference type="ChEBI" id="CHEBI:57856"/>
        <dbReference type="ChEBI" id="CHEBI:59789"/>
        <dbReference type="ChEBI" id="CHEBI:74506"/>
        <dbReference type="ChEBI" id="CHEBI:82748"/>
        <dbReference type="EC" id="2.1.1.199"/>
    </reaction>
</comment>
<comment type="subcellular location">
    <subcellularLocation>
        <location evidence="1">Cytoplasm</location>
    </subcellularLocation>
</comment>
<comment type="similarity">
    <text evidence="1">Belongs to the methyltransferase superfamily. RsmH family.</text>
</comment>
<feature type="chain" id="PRO_0000386815" description="Ribosomal RNA small subunit methyltransferase H">
    <location>
        <begin position="1"/>
        <end position="309"/>
    </location>
</feature>
<feature type="binding site" evidence="1">
    <location>
        <begin position="33"/>
        <end position="35"/>
    </location>
    <ligand>
        <name>S-adenosyl-L-methionine</name>
        <dbReference type="ChEBI" id="CHEBI:59789"/>
    </ligand>
</feature>
<feature type="binding site" evidence="1">
    <location>
        <position position="53"/>
    </location>
    <ligand>
        <name>S-adenosyl-L-methionine</name>
        <dbReference type="ChEBI" id="CHEBI:59789"/>
    </ligand>
</feature>
<feature type="binding site" evidence="1">
    <location>
        <position position="79"/>
    </location>
    <ligand>
        <name>S-adenosyl-L-methionine</name>
        <dbReference type="ChEBI" id="CHEBI:59789"/>
    </ligand>
</feature>
<feature type="binding site" evidence="1">
    <location>
        <position position="100"/>
    </location>
    <ligand>
        <name>S-adenosyl-L-methionine</name>
        <dbReference type="ChEBI" id="CHEBI:59789"/>
    </ligand>
</feature>
<feature type="binding site" evidence="1">
    <location>
        <position position="107"/>
    </location>
    <ligand>
        <name>S-adenosyl-L-methionine</name>
        <dbReference type="ChEBI" id="CHEBI:59789"/>
    </ligand>
</feature>
<organism>
    <name type="scientific">Clostridium botulinum (strain Kyoto / Type A2)</name>
    <dbReference type="NCBI Taxonomy" id="536232"/>
    <lineage>
        <taxon>Bacteria</taxon>
        <taxon>Bacillati</taxon>
        <taxon>Bacillota</taxon>
        <taxon>Clostridia</taxon>
        <taxon>Eubacteriales</taxon>
        <taxon>Clostridiaceae</taxon>
        <taxon>Clostridium</taxon>
    </lineage>
</organism>
<evidence type="ECO:0000255" key="1">
    <source>
        <dbReference type="HAMAP-Rule" id="MF_01007"/>
    </source>
</evidence>
<proteinExistence type="inferred from homology"/>
<sequence length="309" mass="35507">MEFKHISVLLEETIDSLNIKEDGVYVDCTLGGGGHSKEILKKLSHKGKLIGIDQDTSAIKAAKERLKDYENVIYVHNNFYNIDSILEELDIDKVDGIIMDLGVSSYQLDEASRGFSYMKDAPLDMRMNREENLSAYNVVNSYEEEELFKILKNYGEEKFSRKIARFIVEKRTENPIETTGELVEIIRKAIPAKFQREGHPAKRTFQAIRIEVNKELQILNKAIEDSVNRLNKDGRLSIITFHSLEDRIVKVKFKELEKPCTCPPSFPICVCGKEPQIKIITKKPIEPSKEEKEINSRSRSAKLRVCRKI</sequence>
<gene>
    <name evidence="1" type="primary">rsmH</name>
    <name type="synonym">mraW</name>
    <name type="ordered locus">CLM_1691</name>
</gene>
<accession>C1FME6</accession>
<protein>
    <recommendedName>
        <fullName evidence="1">Ribosomal RNA small subunit methyltransferase H</fullName>
        <ecNumber evidence="1">2.1.1.199</ecNumber>
    </recommendedName>
    <alternativeName>
        <fullName evidence="1">16S rRNA m(4)C1402 methyltransferase</fullName>
    </alternativeName>
    <alternativeName>
        <fullName evidence="1">rRNA (cytosine-N(4)-)-methyltransferase RsmH</fullName>
    </alternativeName>
</protein>
<keyword id="KW-0963">Cytoplasm</keyword>
<keyword id="KW-0489">Methyltransferase</keyword>
<keyword id="KW-0698">rRNA processing</keyword>
<keyword id="KW-0949">S-adenosyl-L-methionine</keyword>
<keyword id="KW-0808">Transferase</keyword>
<name>RSMH_CLOBJ</name>
<dbReference type="EC" id="2.1.1.199" evidence="1"/>
<dbReference type="EMBL" id="CP001581">
    <property type="protein sequence ID" value="ACO86012.1"/>
    <property type="molecule type" value="Genomic_DNA"/>
</dbReference>
<dbReference type="RefSeq" id="WP_012705076.1">
    <property type="nucleotide sequence ID" value="NC_012563.1"/>
</dbReference>
<dbReference type="SMR" id="C1FME6"/>
<dbReference type="KEGG" id="cby:CLM_1691"/>
<dbReference type="eggNOG" id="COG0275">
    <property type="taxonomic scope" value="Bacteria"/>
</dbReference>
<dbReference type="HOGENOM" id="CLU_038422_2_0_9"/>
<dbReference type="Proteomes" id="UP000001374">
    <property type="component" value="Chromosome"/>
</dbReference>
<dbReference type="GO" id="GO:0005737">
    <property type="term" value="C:cytoplasm"/>
    <property type="evidence" value="ECO:0007669"/>
    <property type="project" value="UniProtKB-SubCell"/>
</dbReference>
<dbReference type="GO" id="GO:0071424">
    <property type="term" value="F:rRNA (cytosine-N4-)-methyltransferase activity"/>
    <property type="evidence" value="ECO:0007669"/>
    <property type="project" value="UniProtKB-UniRule"/>
</dbReference>
<dbReference type="GO" id="GO:0070475">
    <property type="term" value="P:rRNA base methylation"/>
    <property type="evidence" value="ECO:0007669"/>
    <property type="project" value="UniProtKB-UniRule"/>
</dbReference>
<dbReference type="FunFam" id="1.10.150.170:FF:000001">
    <property type="entry name" value="Ribosomal RNA small subunit methyltransferase H"/>
    <property type="match status" value="1"/>
</dbReference>
<dbReference type="Gene3D" id="1.10.150.170">
    <property type="entry name" value="Putative methyltransferase TM0872, insert domain"/>
    <property type="match status" value="1"/>
</dbReference>
<dbReference type="Gene3D" id="3.40.50.150">
    <property type="entry name" value="Vaccinia Virus protein VP39"/>
    <property type="match status" value="1"/>
</dbReference>
<dbReference type="HAMAP" id="MF_01007">
    <property type="entry name" value="16SrRNA_methyltr_H"/>
    <property type="match status" value="1"/>
</dbReference>
<dbReference type="InterPro" id="IPR002903">
    <property type="entry name" value="RsmH"/>
</dbReference>
<dbReference type="InterPro" id="IPR023397">
    <property type="entry name" value="SAM-dep_MeTrfase_MraW_recog"/>
</dbReference>
<dbReference type="InterPro" id="IPR029063">
    <property type="entry name" value="SAM-dependent_MTases_sf"/>
</dbReference>
<dbReference type="NCBIfam" id="TIGR00006">
    <property type="entry name" value="16S rRNA (cytosine(1402)-N(4))-methyltransferase RsmH"/>
    <property type="match status" value="1"/>
</dbReference>
<dbReference type="PANTHER" id="PTHR11265:SF0">
    <property type="entry name" value="12S RRNA N4-METHYLCYTIDINE METHYLTRANSFERASE"/>
    <property type="match status" value="1"/>
</dbReference>
<dbReference type="PANTHER" id="PTHR11265">
    <property type="entry name" value="S-ADENOSYL-METHYLTRANSFERASE MRAW"/>
    <property type="match status" value="1"/>
</dbReference>
<dbReference type="Pfam" id="PF01795">
    <property type="entry name" value="Methyltransf_5"/>
    <property type="match status" value="1"/>
</dbReference>
<dbReference type="PIRSF" id="PIRSF004486">
    <property type="entry name" value="MraW"/>
    <property type="match status" value="1"/>
</dbReference>
<dbReference type="SUPFAM" id="SSF81799">
    <property type="entry name" value="Putative methyltransferase TM0872, insert domain"/>
    <property type="match status" value="1"/>
</dbReference>
<dbReference type="SUPFAM" id="SSF53335">
    <property type="entry name" value="S-adenosyl-L-methionine-dependent methyltransferases"/>
    <property type="match status" value="1"/>
</dbReference>
<reference key="1">
    <citation type="submission" date="2008-10" db="EMBL/GenBank/DDBJ databases">
        <title>Genome sequence of Clostridium botulinum A2 Kyoto.</title>
        <authorList>
            <person name="Shrivastava S."/>
            <person name="Brinkac L.M."/>
            <person name="Brown J.L."/>
            <person name="Bruce D."/>
            <person name="Detter C.C."/>
            <person name="Johnson E.A."/>
            <person name="Munk C.A."/>
            <person name="Smith L.A."/>
            <person name="Smith T.J."/>
            <person name="Sutton G."/>
            <person name="Brettin T.S."/>
        </authorList>
    </citation>
    <scope>NUCLEOTIDE SEQUENCE [LARGE SCALE GENOMIC DNA]</scope>
    <source>
        <strain>Kyoto / Type A2</strain>
    </source>
</reference>